<gene>
    <name evidence="1" type="primary">ldh</name>
    <name type="ordered locus">BLA_0792</name>
</gene>
<protein>
    <recommendedName>
        <fullName evidence="1">L-lactate dehydrogenase</fullName>
        <shortName evidence="1">L-LDH</shortName>
        <ecNumber evidence="1">1.1.1.27</ecNumber>
    </recommendedName>
</protein>
<name>LDH_BIFA0</name>
<accession>B8DSV5</accession>
<comment type="function">
    <text evidence="1">Catalyzes the conversion of lactate to pyruvate.</text>
</comment>
<comment type="catalytic activity">
    <reaction evidence="1">
        <text>(S)-lactate + NAD(+) = pyruvate + NADH + H(+)</text>
        <dbReference type="Rhea" id="RHEA:23444"/>
        <dbReference type="ChEBI" id="CHEBI:15361"/>
        <dbReference type="ChEBI" id="CHEBI:15378"/>
        <dbReference type="ChEBI" id="CHEBI:16651"/>
        <dbReference type="ChEBI" id="CHEBI:57540"/>
        <dbReference type="ChEBI" id="CHEBI:57945"/>
        <dbReference type="EC" id="1.1.1.27"/>
    </reaction>
</comment>
<comment type="activity regulation">
    <text evidence="1">Allosterically activated by fructose 1,6-bisphosphate (FBP).</text>
</comment>
<comment type="pathway">
    <text evidence="1">Fermentation; pyruvate fermentation to lactate; (S)-lactate from pyruvate: step 1/1.</text>
</comment>
<comment type="subunit">
    <text evidence="1">Homotetramer.</text>
</comment>
<comment type="subcellular location">
    <subcellularLocation>
        <location evidence="1">Cytoplasm</location>
    </subcellularLocation>
</comment>
<comment type="similarity">
    <text evidence="1">Belongs to the LDH/MDH superfamily. LDH family.</text>
</comment>
<organism>
    <name type="scientific">Bifidobacterium animalis subsp. lactis (strain AD011)</name>
    <dbReference type="NCBI Taxonomy" id="442563"/>
    <lineage>
        <taxon>Bacteria</taxon>
        <taxon>Bacillati</taxon>
        <taxon>Actinomycetota</taxon>
        <taxon>Actinomycetes</taxon>
        <taxon>Bifidobacteriales</taxon>
        <taxon>Bifidobacteriaceae</taxon>
        <taxon>Bifidobacterium</taxon>
    </lineage>
</organism>
<feature type="chain" id="PRO_1000190772" description="L-lactate dehydrogenase">
    <location>
        <begin position="1"/>
        <end position="320"/>
    </location>
</feature>
<feature type="active site" description="Proton acceptor" evidence="1">
    <location>
        <position position="181"/>
    </location>
</feature>
<feature type="binding site" evidence="1">
    <location>
        <position position="19"/>
    </location>
    <ligand>
        <name>NAD(+)</name>
        <dbReference type="ChEBI" id="CHEBI:57540"/>
    </ligand>
</feature>
<feature type="binding site" evidence="1">
    <location>
        <position position="40"/>
    </location>
    <ligand>
        <name>NAD(+)</name>
        <dbReference type="ChEBI" id="CHEBI:57540"/>
    </ligand>
</feature>
<feature type="binding site" evidence="1">
    <location>
        <position position="45"/>
    </location>
    <ligand>
        <name>NAD(+)</name>
        <dbReference type="ChEBI" id="CHEBI:57540"/>
    </ligand>
</feature>
<feature type="binding site" evidence="1">
    <location>
        <begin position="85"/>
        <end position="86"/>
    </location>
    <ligand>
        <name>NAD(+)</name>
        <dbReference type="ChEBI" id="CHEBI:57540"/>
    </ligand>
</feature>
<feature type="binding site" evidence="1">
    <location>
        <position position="88"/>
    </location>
    <ligand>
        <name>substrate</name>
    </ligand>
</feature>
<feature type="binding site" evidence="1">
    <location>
        <position position="94"/>
    </location>
    <ligand>
        <name>substrate</name>
    </ligand>
</feature>
<feature type="binding site" evidence="1">
    <location>
        <position position="107"/>
    </location>
    <ligand>
        <name>NAD(+)</name>
        <dbReference type="ChEBI" id="CHEBI:57540"/>
    </ligand>
</feature>
<feature type="binding site" evidence="1">
    <location>
        <begin position="124"/>
        <end position="126"/>
    </location>
    <ligand>
        <name>NAD(+)</name>
        <dbReference type="ChEBI" id="CHEBI:57540"/>
    </ligand>
</feature>
<feature type="binding site" evidence="1">
    <location>
        <begin position="126"/>
        <end position="129"/>
    </location>
    <ligand>
        <name>substrate</name>
    </ligand>
</feature>
<feature type="binding site" evidence="1">
    <location>
        <position position="149"/>
    </location>
    <ligand>
        <name>NAD(+)</name>
        <dbReference type="ChEBI" id="CHEBI:57540"/>
    </ligand>
</feature>
<feature type="binding site" evidence="1">
    <location>
        <begin position="154"/>
        <end position="157"/>
    </location>
    <ligand>
        <name>substrate</name>
    </ligand>
</feature>
<feature type="binding site" evidence="1">
    <location>
        <position position="159"/>
    </location>
    <ligand>
        <name>beta-D-fructose 1,6-bisphosphate</name>
        <dbReference type="ChEBI" id="CHEBI:32966"/>
        <note>allosteric activator</note>
    </ligand>
</feature>
<feature type="binding site" evidence="1">
    <location>
        <position position="174"/>
    </location>
    <ligand>
        <name>beta-D-fructose 1,6-bisphosphate</name>
        <dbReference type="ChEBI" id="CHEBI:32966"/>
        <note>allosteric activator</note>
    </ligand>
</feature>
<feature type="binding site" evidence="1">
    <location>
        <position position="237"/>
    </location>
    <ligand>
        <name>substrate</name>
    </ligand>
</feature>
<feature type="modified residue" description="Phosphotyrosine" evidence="1">
    <location>
        <position position="228"/>
    </location>
</feature>
<sequence>MVNSPIKPTKLAIVGAGAVGSTLAFAAAERGIAREIALQDIAKERVEAEVLDMQHGSSFFPTVSIEGSDDPEVCRDADMVVITAGARQKPGQSRLDLAGATINIMKSIIPNMLKVAPNAIYMLITNPVDIVTHVAMKLSGLPASRMFGSGTNLDSARLRFLIAQQTGVNVKNVHAYIAGEHGDSEVPLWASATIGGVPMCDWQALPGHEPLDAEARERIHQEVKNAAYKIINGKGATNYAISMSGVDIIEAILKDSNRILPVSSLLSDFHGISDVCMSVPTLLNRNGVNSRINTPVSDRELAALKRSAETLRETAAQFGF</sequence>
<dbReference type="EC" id="1.1.1.27" evidence="1"/>
<dbReference type="EMBL" id="CP001213">
    <property type="protein sequence ID" value="ACL29084.1"/>
    <property type="molecule type" value="Genomic_DNA"/>
</dbReference>
<dbReference type="RefSeq" id="WP_012619833.1">
    <property type="nucleotide sequence ID" value="NC_011835.1"/>
</dbReference>
<dbReference type="SMR" id="B8DSV5"/>
<dbReference type="STRING" id="442563.BLA_0792"/>
<dbReference type="KEGG" id="bla:BLA_0792"/>
<dbReference type="PATRIC" id="fig|442563.4.peg.825"/>
<dbReference type="HOGENOM" id="CLU_045401_1_1_11"/>
<dbReference type="UniPathway" id="UPA00554">
    <property type="reaction ID" value="UER00611"/>
</dbReference>
<dbReference type="Proteomes" id="UP000002456">
    <property type="component" value="Chromosome"/>
</dbReference>
<dbReference type="GO" id="GO:0005737">
    <property type="term" value="C:cytoplasm"/>
    <property type="evidence" value="ECO:0007669"/>
    <property type="project" value="UniProtKB-SubCell"/>
</dbReference>
<dbReference type="GO" id="GO:0004459">
    <property type="term" value="F:L-lactate dehydrogenase activity"/>
    <property type="evidence" value="ECO:0007669"/>
    <property type="project" value="UniProtKB-UniRule"/>
</dbReference>
<dbReference type="GO" id="GO:0006096">
    <property type="term" value="P:glycolytic process"/>
    <property type="evidence" value="ECO:0007669"/>
    <property type="project" value="UniProtKB-UniRule"/>
</dbReference>
<dbReference type="GO" id="GO:0006089">
    <property type="term" value="P:lactate metabolic process"/>
    <property type="evidence" value="ECO:0007669"/>
    <property type="project" value="TreeGrafter"/>
</dbReference>
<dbReference type="CDD" id="cd05292">
    <property type="entry name" value="LDH_2"/>
    <property type="match status" value="1"/>
</dbReference>
<dbReference type="Gene3D" id="3.90.110.10">
    <property type="entry name" value="Lactate dehydrogenase/glycoside hydrolase, family 4, C-terminal"/>
    <property type="match status" value="1"/>
</dbReference>
<dbReference type="Gene3D" id="3.40.50.720">
    <property type="entry name" value="NAD(P)-binding Rossmann-like Domain"/>
    <property type="match status" value="1"/>
</dbReference>
<dbReference type="HAMAP" id="MF_00488">
    <property type="entry name" value="Lactate_dehydrog"/>
    <property type="match status" value="1"/>
</dbReference>
<dbReference type="InterPro" id="IPR001557">
    <property type="entry name" value="L-lactate/malate_DH"/>
</dbReference>
<dbReference type="InterPro" id="IPR011304">
    <property type="entry name" value="L-lactate_DH"/>
</dbReference>
<dbReference type="InterPro" id="IPR018177">
    <property type="entry name" value="L-lactate_DH_AS"/>
</dbReference>
<dbReference type="InterPro" id="IPR022383">
    <property type="entry name" value="Lactate/malate_DH_C"/>
</dbReference>
<dbReference type="InterPro" id="IPR001236">
    <property type="entry name" value="Lactate/malate_DH_N"/>
</dbReference>
<dbReference type="InterPro" id="IPR015955">
    <property type="entry name" value="Lactate_DH/Glyco_Ohase_4_C"/>
</dbReference>
<dbReference type="InterPro" id="IPR036291">
    <property type="entry name" value="NAD(P)-bd_dom_sf"/>
</dbReference>
<dbReference type="NCBIfam" id="TIGR01771">
    <property type="entry name" value="L-LDH-NAD"/>
    <property type="match status" value="1"/>
</dbReference>
<dbReference type="PANTHER" id="PTHR43128">
    <property type="entry name" value="L-2-HYDROXYCARBOXYLATE DEHYDROGENASE (NAD(P)(+))"/>
    <property type="match status" value="1"/>
</dbReference>
<dbReference type="PANTHER" id="PTHR43128:SF16">
    <property type="entry name" value="L-LACTATE DEHYDROGENASE"/>
    <property type="match status" value="1"/>
</dbReference>
<dbReference type="Pfam" id="PF02866">
    <property type="entry name" value="Ldh_1_C"/>
    <property type="match status" value="1"/>
</dbReference>
<dbReference type="Pfam" id="PF00056">
    <property type="entry name" value="Ldh_1_N"/>
    <property type="match status" value="1"/>
</dbReference>
<dbReference type="PIRSF" id="PIRSF000102">
    <property type="entry name" value="Lac_mal_DH"/>
    <property type="match status" value="1"/>
</dbReference>
<dbReference type="PRINTS" id="PR00086">
    <property type="entry name" value="LLDHDRGNASE"/>
</dbReference>
<dbReference type="SUPFAM" id="SSF56327">
    <property type="entry name" value="LDH C-terminal domain-like"/>
    <property type="match status" value="1"/>
</dbReference>
<dbReference type="SUPFAM" id="SSF51735">
    <property type="entry name" value="NAD(P)-binding Rossmann-fold domains"/>
    <property type="match status" value="1"/>
</dbReference>
<dbReference type="PROSITE" id="PS00064">
    <property type="entry name" value="L_LDH"/>
    <property type="match status" value="1"/>
</dbReference>
<proteinExistence type="inferred from homology"/>
<reference key="1">
    <citation type="journal article" date="2009" name="J. Bacteriol.">
        <title>Genome sequence of the probiotic bacterium Bifidobacterium animalis subsp. lactis AD011.</title>
        <authorList>
            <person name="Kim J.F."/>
            <person name="Jeong H."/>
            <person name="Yu D.S."/>
            <person name="Choi S.-H."/>
            <person name="Hur C.-G."/>
            <person name="Park M.-S."/>
            <person name="Yoon S.H."/>
            <person name="Kim D.-W."/>
            <person name="Ji G.E."/>
            <person name="Park H.-S."/>
            <person name="Oh T.K."/>
        </authorList>
    </citation>
    <scope>NUCLEOTIDE SEQUENCE [LARGE SCALE GENOMIC DNA]</scope>
    <source>
        <strain>AD011</strain>
    </source>
</reference>
<evidence type="ECO:0000255" key="1">
    <source>
        <dbReference type="HAMAP-Rule" id="MF_00488"/>
    </source>
</evidence>
<keyword id="KW-0021">Allosteric enzyme</keyword>
<keyword id="KW-0963">Cytoplasm</keyword>
<keyword id="KW-0520">NAD</keyword>
<keyword id="KW-0560">Oxidoreductase</keyword>
<keyword id="KW-0597">Phosphoprotein</keyword>
<keyword id="KW-1185">Reference proteome</keyword>